<comment type="function">
    <text>TRAP proteins are part of a complex whose function is to bind calcium to the ER membrane and thereby regulate the retention of ER resident proteins.</text>
</comment>
<comment type="subunit">
    <text evidence="1">Heterotetramer of TRAP-alpha, TRAP-beta, TRAP-delta and TRAP-gamma. Interacts with STING1 (By similarity).</text>
</comment>
<comment type="subcellular location">
    <subcellularLocation>
        <location>Endoplasmic reticulum membrane</location>
        <topology>Single-pass type I membrane protein</topology>
    </subcellularLocation>
</comment>
<comment type="similarity">
    <text evidence="5">Belongs to the TRAP-beta family.</text>
</comment>
<proteinExistence type="evidence at protein level"/>
<protein>
    <recommendedName>
        <fullName>Translocon-associated protein subunit beta</fullName>
        <shortName>TRAP-beta</shortName>
    </recommendedName>
    <alternativeName>
        <fullName>Glycoprotein 25H</fullName>
        <shortName>gp25H</shortName>
    </alternativeName>
    <alternativeName>
        <fullName>Signal sequence receptor subunit beta</fullName>
        <shortName>SSR-beta</shortName>
    </alternativeName>
</protein>
<organism>
    <name type="scientific">Canis lupus familiaris</name>
    <name type="common">Dog</name>
    <name type="synonym">Canis familiaris</name>
    <dbReference type="NCBI Taxonomy" id="9615"/>
    <lineage>
        <taxon>Eukaryota</taxon>
        <taxon>Metazoa</taxon>
        <taxon>Chordata</taxon>
        <taxon>Craniata</taxon>
        <taxon>Vertebrata</taxon>
        <taxon>Euteleostomi</taxon>
        <taxon>Mammalia</taxon>
        <taxon>Eutheria</taxon>
        <taxon>Laurasiatheria</taxon>
        <taxon>Carnivora</taxon>
        <taxon>Caniformia</taxon>
        <taxon>Canidae</taxon>
        <taxon>Canis</taxon>
    </lineage>
</organism>
<dbReference type="EMBL" id="X53529">
    <property type="protein sequence ID" value="CAA37609.1"/>
    <property type="molecule type" value="mRNA"/>
</dbReference>
<dbReference type="EMBL" id="X53591">
    <property type="protein sequence ID" value="CAA37661.1"/>
    <property type="molecule type" value="mRNA"/>
</dbReference>
<dbReference type="PIR" id="A36679">
    <property type="entry name" value="A36679"/>
</dbReference>
<dbReference type="RefSeq" id="NP_001003269.1">
    <property type="nucleotide sequence ID" value="NM_001003269.2"/>
</dbReference>
<dbReference type="PDB" id="8BTK">
    <property type="method" value="EM"/>
    <property type="resolution" value="3.50 A"/>
    <property type="chains" value="TB=1-183"/>
</dbReference>
<dbReference type="PDB" id="8RJC">
    <property type="method" value="EM"/>
    <property type="resolution" value="2.90 A"/>
    <property type="chains" value="6=1-183"/>
</dbReference>
<dbReference type="PDB" id="8RJD">
    <property type="method" value="EM"/>
    <property type="resolution" value="2.79 A"/>
    <property type="chains" value="6=1-183"/>
</dbReference>
<dbReference type="PDBsum" id="8BTK"/>
<dbReference type="PDBsum" id="8RJC"/>
<dbReference type="PDBsum" id="8RJD"/>
<dbReference type="EMDB" id="EMD-16232"/>
<dbReference type="EMDB" id="EMD-19197"/>
<dbReference type="EMDB" id="EMD-19198"/>
<dbReference type="SMR" id="P23438"/>
<dbReference type="CORUM" id="P23438"/>
<dbReference type="FunCoup" id="P23438">
    <property type="interactions" value="1061"/>
</dbReference>
<dbReference type="STRING" id="9615.ENSCAFP00000024839"/>
<dbReference type="GlyCosmos" id="P23438">
    <property type="glycosylation" value="2 sites, No reported glycans"/>
</dbReference>
<dbReference type="PaxDb" id="9612-ENSCAFP00000024839"/>
<dbReference type="Ensembl" id="ENSCAFT00000026734.5">
    <property type="protein sequence ID" value="ENSCAFP00000024839.4"/>
    <property type="gene ID" value="ENSCAFG00000016882.5"/>
</dbReference>
<dbReference type="Ensembl" id="ENSCAFT00030000502.1">
    <property type="protein sequence ID" value="ENSCAFP00030000440.1"/>
    <property type="gene ID" value="ENSCAFG00030000294.1"/>
</dbReference>
<dbReference type="Ensembl" id="ENSCAFT00040039674.1">
    <property type="protein sequence ID" value="ENSCAFP00040034620.1"/>
    <property type="gene ID" value="ENSCAFG00040021358.1"/>
</dbReference>
<dbReference type="Ensembl" id="ENSCAFT00845018570.1">
    <property type="protein sequence ID" value="ENSCAFP00845014487.1"/>
    <property type="gene ID" value="ENSCAFG00845010530.1"/>
</dbReference>
<dbReference type="GeneID" id="403950"/>
<dbReference type="KEGG" id="cfa:403950"/>
<dbReference type="CTD" id="6746"/>
<dbReference type="VEuPathDB" id="HostDB:ENSCAFG00845010530"/>
<dbReference type="VGNC" id="VGNC:46838">
    <property type="gene designation" value="SSR2"/>
</dbReference>
<dbReference type="eggNOG" id="KOG3317">
    <property type="taxonomic scope" value="Eukaryota"/>
</dbReference>
<dbReference type="GeneTree" id="ENSGT00390000005125"/>
<dbReference type="InParanoid" id="P23438"/>
<dbReference type="OrthoDB" id="5860827at2759"/>
<dbReference type="Proteomes" id="UP000002254">
    <property type="component" value="Chromosome 7"/>
</dbReference>
<dbReference type="Proteomes" id="UP000694429">
    <property type="component" value="Chromosome 7"/>
</dbReference>
<dbReference type="Proteomes" id="UP000694542">
    <property type="component" value="Chromosome 7"/>
</dbReference>
<dbReference type="Proteomes" id="UP000805418">
    <property type="component" value="Chromosome 7"/>
</dbReference>
<dbReference type="Bgee" id="ENSCAFG00000016882">
    <property type="expression patterns" value="Expressed in saliva-secreting gland and 48 other cell types or tissues"/>
</dbReference>
<dbReference type="GO" id="GO:0005789">
    <property type="term" value="C:endoplasmic reticulum membrane"/>
    <property type="evidence" value="ECO:0000304"/>
    <property type="project" value="Reactome"/>
</dbReference>
<dbReference type="GO" id="GO:0001701">
    <property type="term" value="P:in utero embryonic development"/>
    <property type="evidence" value="ECO:0007669"/>
    <property type="project" value="Ensembl"/>
</dbReference>
<dbReference type="InterPro" id="IPR008856">
    <property type="entry name" value="TRAP_beta"/>
</dbReference>
<dbReference type="PANTHER" id="PTHR12861:SF3">
    <property type="entry name" value="TRANSLOCON-ASSOCIATED PROTEIN SUBUNIT BETA"/>
    <property type="match status" value="1"/>
</dbReference>
<dbReference type="PANTHER" id="PTHR12861">
    <property type="entry name" value="TRANSLOCON-ASSOCIATED PROTEIN, BETA SUBUNIT PRECURSOR TRAP-BETA SIGNAL SEQUENCE RECEPTOR BETA SUBUNIT"/>
    <property type="match status" value="1"/>
</dbReference>
<dbReference type="Pfam" id="PF05753">
    <property type="entry name" value="TRAP_beta"/>
    <property type="match status" value="1"/>
</dbReference>
<dbReference type="PIRSF" id="PIRSF016400">
    <property type="entry name" value="TRAP_beta"/>
    <property type="match status" value="1"/>
</dbReference>
<name>SSRB_CANLF</name>
<sequence length="183" mass="20100">MRLLASVLLALFAVSHAEEGARLLASKSLLNRYAVEGRDLTLQYNIYNVGSSAALDVELSDDSFPPEDFGIVSGMLNVKWDRIAPASNVSHTVVLRPLKAGYFNFTSATVTYLAQEDGPVVIGFTSAPGQGGILAQREFDRRFSPHFLDWAAFGVMTLPSIGIPLLLWYSSKRKYDTPKSKKN</sequence>
<feature type="signal peptide" evidence="3 4">
    <location>
        <begin position="1"/>
        <end position="17"/>
    </location>
</feature>
<feature type="chain" id="PRO_0000033289" description="Translocon-associated protein subunit beta">
    <location>
        <begin position="18"/>
        <end position="183"/>
    </location>
</feature>
<feature type="topological domain" description="Lumenal" evidence="2">
    <location>
        <begin position="18"/>
        <end position="149"/>
    </location>
</feature>
<feature type="transmembrane region" description="Helical" evidence="2">
    <location>
        <begin position="150"/>
        <end position="169"/>
    </location>
</feature>
<feature type="topological domain" description="Cytoplasmic" evidence="2">
    <location>
        <begin position="170"/>
        <end position="183"/>
    </location>
</feature>
<feature type="glycosylation site" description="N-linked (GlcNAc...) asparagine" evidence="2">
    <location>
        <position position="88"/>
    </location>
</feature>
<feature type="glycosylation site" description="N-linked (GlcNAc...) asparagine" evidence="2">
    <location>
        <position position="104"/>
    </location>
</feature>
<keyword id="KW-0002">3D-structure</keyword>
<keyword id="KW-0903">Direct protein sequencing</keyword>
<keyword id="KW-0256">Endoplasmic reticulum</keyword>
<keyword id="KW-0325">Glycoprotein</keyword>
<keyword id="KW-0472">Membrane</keyword>
<keyword id="KW-1185">Reference proteome</keyword>
<keyword id="KW-0732">Signal</keyword>
<keyword id="KW-0812">Transmembrane</keyword>
<keyword id="KW-1133">Transmembrane helix</keyword>
<gene>
    <name type="primary">SSR2</name>
</gene>
<evidence type="ECO:0000250" key="1"/>
<evidence type="ECO:0000255" key="2"/>
<evidence type="ECO:0000269" key="3">
    <source>
    </source>
</evidence>
<evidence type="ECO:0000269" key="4">
    <source>
    </source>
</evidence>
<evidence type="ECO:0000305" key="5"/>
<accession>P23438</accession>
<reference key="1">
    <citation type="journal article" date="1990" name="J. Cell Biol.">
        <title>The signal sequence receptor has a second subunit and is part of a translocation complex in the endoplasmic reticulum as probed by bifunctional reagents.</title>
        <authorList>
            <person name="Goerlich D."/>
            <person name="Prehn S."/>
            <person name="Hartmann E."/>
            <person name="Herz J."/>
            <person name="Otto A."/>
            <person name="Kraft R."/>
            <person name="Wiedmann M."/>
            <person name="Knespel S."/>
            <person name="Dobberstein B."/>
            <person name="Rapoport T.A."/>
        </authorList>
    </citation>
    <scope>NUCLEOTIDE SEQUENCE [MRNA]</scope>
    <scope>PROTEIN SEQUENCE OF 18-50 AND 83-120</scope>
</reference>
<reference key="2">
    <citation type="journal article" date="1991" name="J. Biol. Chem.">
        <title>SSR alpha and associated calnexin are major calcium binding proteins of the endoplasmic reticulum membrane.</title>
        <authorList>
            <person name="Wada I."/>
            <person name="Rindress D."/>
            <person name="Cameron P.H."/>
            <person name="Ou W.-J."/>
            <person name="Doherty J.J. II"/>
            <person name="Louvard D."/>
            <person name="Bell A.W."/>
            <person name="Dignard D."/>
            <person name="Thomas D.Y."/>
            <person name="Bergeron J.J.M."/>
        </authorList>
    </citation>
    <scope>NUCLEOTIDE SEQUENCE [MRNA]</scope>
    <scope>PROTEIN SEQUENCE OF 18-42; 59-106 AND 140-162</scope>
    <source>
        <tissue>Pancreas</tissue>
    </source>
</reference>